<organism>
    <name type="scientific">Pongo abelii</name>
    <name type="common">Sumatran orangutan</name>
    <name type="synonym">Pongo pygmaeus abelii</name>
    <dbReference type="NCBI Taxonomy" id="9601"/>
    <lineage>
        <taxon>Eukaryota</taxon>
        <taxon>Metazoa</taxon>
        <taxon>Chordata</taxon>
        <taxon>Craniata</taxon>
        <taxon>Vertebrata</taxon>
        <taxon>Euteleostomi</taxon>
        <taxon>Mammalia</taxon>
        <taxon>Eutheria</taxon>
        <taxon>Euarchontoglires</taxon>
        <taxon>Primates</taxon>
        <taxon>Haplorrhini</taxon>
        <taxon>Catarrhini</taxon>
        <taxon>Hominidae</taxon>
        <taxon>Pongo</taxon>
    </lineage>
</organism>
<name>THAP1_PONAB</name>
<protein>
    <recommendedName>
        <fullName>THAP domain-containing protein 1</fullName>
    </recommendedName>
</protein>
<accession>Q5RCE4</accession>
<evidence type="ECO:0000250" key="1"/>
<evidence type="ECO:0000255" key="2"/>
<evidence type="ECO:0000255" key="3">
    <source>
        <dbReference type="PROSITE-ProRule" id="PRU00309"/>
    </source>
</evidence>
<evidence type="ECO:0000305" key="4"/>
<gene>
    <name type="primary">THAP1</name>
</gene>
<dbReference type="EMBL" id="CR858327">
    <property type="protein sequence ID" value="CAH90563.1"/>
    <property type="molecule type" value="mRNA"/>
</dbReference>
<dbReference type="RefSeq" id="NP_001125299.1">
    <property type="nucleotide sequence ID" value="NM_001131827.1"/>
</dbReference>
<dbReference type="BMRB" id="Q5RCE4"/>
<dbReference type="SMR" id="Q5RCE4"/>
<dbReference type="FunCoup" id="Q5RCE4">
    <property type="interactions" value="3740"/>
</dbReference>
<dbReference type="STRING" id="9601.ENSPPYP00000020815"/>
<dbReference type="Ensembl" id="ENSPPYT00000055393.1">
    <property type="protein sequence ID" value="ENSPPYP00000031967.1"/>
    <property type="gene ID" value="ENSPPYG00000034807.1"/>
</dbReference>
<dbReference type="GeneID" id="100172198"/>
<dbReference type="KEGG" id="pon:100172198"/>
<dbReference type="CTD" id="55145"/>
<dbReference type="GeneTree" id="ENSGT00940000159383"/>
<dbReference type="InParanoid" id="Q5RCE4"/>
<dbReference type="OMA" id="TKDCFKR"/>
<dbReference type="OrthoDB" id="9867479at2759"/>
<dbReference type="Proteomes" id="UP000001595">
    <property type="component" value="Chromosome 8"/>
</dbReference>
<dbReference type="GO" id="GO:0001650">
    <property type="term" value="C:fibrillar center"/>
    <property type="evidence" value="ECO:0007669"/>
    <property type="project" value="Ensembl"/>
</dbReference>
<dbReference type="GO" id="GO:0005634">
    <property type="term" value="C:nucleus"/>
    <property type="evidence" value="ECO:0000250"/>
    <property type="project" value="UniProtKB"/>
</dbReference>
<dbReference type="GO" id="GO:0016605">
    <property type="term" value="C:PML body"/>
    <property type="evidence" value="ECO:0007669"/>
    <property type="project" value="UniProtKB-SubCell"/>
</dbReference>
<dbReference type="GO" id="GO:0001227">
    <property type="term" value="F:DNA-binding transcription repressor activity, RNA polymerase II-specific"/>
    <property type="evidence" value="ECO:0007669"/>
    <property type="project" value="Ensembl"/>
</dbReference>
<dbReference type="GO" id="GO:0042803">
    <property type="term" value="F:protein homodimerization activity"/>
    <property type="evidence" value="ECO:0000250"/>
    <property type="project" value="UniProtKB"/>
</dbReference>
<dbReference type="GO" id="GO:0000978">
    <property type="term" value="F:RNA polymerase II cis-regulatory region sequence-specific DNA binding"/>
    <property type="evidence" value="ECO:0007669"/>
    <property type="project" value="Ensembl"/>
</dbReference>
<dbReference type="GO" id="GO:0043565">
    <property type="term" value="F:sequence-specific DNA binding"/>
    <property type="evidence" value="ECO:0000250"/>
    <property type="project" value="UniProtKB"/>
</dbReference>
<dbReference type="GO" id="GO:0008270">
    <property type="term" value="F:zinc ion binding"/>
    <property type="evidence" value="ECO:0000250"/>
    <property type="project" value="UniProtKB"/>
</dbReference>
<dbReference type="GO" id="GO:0006351">
    <property type="term" value="P:DNA-templated transcription"/>
    <property type="evidence" value="ECO:0000250"/>
    <property type="project" value="UniProtKB"/>
</dbReference>
<dbReference type="GO" id="GO:0001935">
    <property type="term" value="P:endothelial cell proliferation"/>
    <property type="evidence" value="ECO:0000250"/>
    <property type="project" value="UniProtKB"/>
</dbReference>
<dbReference type="GO" id="GO:0006355">
    <property type="term" value="P:regulation of DNA-templated transcription"/>
    <property type="evidence" value="ECO:0000250"/>
    <property type="project" value="UniProtKB"/>
</dbReference>
<dbReference type="GO" id="GO:0007346">
    <property type="term" value="P:regulation of mitotic cell cycle"/>
    <property type="evidence" value="ECO:0000250"/>
    <property type="project" value="UniProtKB"/>
</dbReference>
<dbReference type="Gene3D" id="6.20.210.20">
    <property type="entry name" value="THAP domain"/>
    <property type="match status" value="1"/>
</dbReference>
<dbReference type="InterPro" id="IPR026516">
    <property type="entry name" value="THAP1/10"/>
</dbReference>
<dbReference type="InterPro" id="IPR006612">
    <property type="entry name" value="THAP_Znf"/>
</dbReference>
<dbReference type="InterPro" id="IPR038441">
    <property type="entry name" value="THAP_Znf_sf"/>
</dbReference>
<dbReference type="PANTHER" id="PTHR46600">
    <property type="entry name" value="THAP DOMAIN-CONTAINING"/>
    <property type="match status" value="1"/>
</dbReference>
<dbReference type="PANTHER" id="PTHR46600:SF1">
    <property type="entry name" value="THAP DOMAIN-CONTAINING PROTEIN 1"/>
    <property type="match status" value="1"/>
</dbReference>
<dbReference type="Pfam" id="PF05485">
    <property type="entry name" value="THAP"/>
    <property type="match status" value="1"/>
</dbReference>
<dbReference type="SMART" id="SM00692">
    <property type="entry name" value="DM3"/>
    <property type="match status" value="1"/>
</dbReference>
<dbReference type="SMART" id="SM00980">
    <property type="entry name" value="THAP"/>
    <property type="match status" value="1"/>
</dbReference>
<dbReference type="SUPFAM" id="SSF57716">
    <property type="entry name" value="Glucocorticoid receptor-like (DNA-binding domain)"/>
    <property type="match status" value="1"/>
</dbReference>
<dbReference type="PROSITE" id="PS50950">
    <property type="entry name" value="ZF_THAP"/>
    <property type="match status" value="1"/>
</dbReference>
<feature type="chain" id="PRO_0000068640" description="THAP domain-containing protein 1">
    <location>
        <begin position="1"/>
        <end position="213"/>
    </location>
</feature>
<feature type="zinc finger region" description="THAP-type" evidence="3">
    <location>
        <begin position="5"/>
        <end position="57"/>
    </location>
</feature>
<feature type="coiled-coil region" evidence="2">
    <location>
        <begin position="139"/>
        <end position="190"/>
    </location>
</feature>
<feature type="short sequence motif" description="HCFC1-binding motif (HBM)" evidence="1">
    <location>
        <begin position="134"/>
        <end position="137"/>
    </location>
</feature>
<comment type="function">
    <text evidence="1">DNA-binding transcription regulator that regulates endothelial cell proliferation and G1/S cell-cycle progression. Specifically binds the 5'-[AT]NTNN[GT]GGCA[AGT]-3' core DNA sequence and acts by modulating expression of pRB-E2F cell-cycle target genes, including RRM1. Component of a THAP1/THAP3-HCFC1-OGT complex that is required for the regulation of the transcriptional activity of RRM1. May also have pro-apoptotic activity by potentiating both serum-withdrawal and TNF-induced apoptosis (By similarity).</text>
</comment>
<comment type="subunit">
    <text evidence="1">Interacts with PAWR. Component of a THAP1/THAP3-HCFC1-OGT complex that contains, either THAP1 or THAP3, HCFC1 and OGT. Interacts with OGT. Interacts (via the HBM) with HCFC1 (via the Kelch-repeat domain); the interaction recruits HCFC1 to the RRM1 promoter (By similarity).</text>
</comment>
<comment type="subcellular location">
    <subcellularLocation>
        <location evidence="1">Nucleus</location>
        <location evidence="1">Nucleoplasm</location>
    </subcellularLocation>
    <subcellularLocation>
        <location evidence="1">Nucleus</location>
        <location evidence="1">PML body</location>
    </subcellularLocation>
</comment>
<comment type="similarity">
    <text evidence="4">Belongs to the THAP1 family.</text>
</comment>
<sequence length="213" mass="24944">MVQSCSAYGCKNRYDKDKPVSFHKFPLTRPSLCKEWEAAVRRKNFKPTKYSSICSEHFTPDCFKRECNNKLLKENAVPTIFLCTEPHDKKEDLLEPQEQLPPPPLPPPVSQVDAAIGLLMPPLQTPVNLSVFCDHNYTVEDTMHQRKRIHQLEQQVEKLRKKLKTAQQRCRRQERQLEKLKEVVHFQKEKDDVSERGYVILPNDYFEIVEVPA</sequence>
<proteinExistence type="evidence at transcript level"/>
<reference key="1">
    <citation type="submission" date="2004-11" db="EMBL/GenBank/DDBJ databases">
        <authorList>
            <consortium name="The German cDNA consortium"/>
        </authorList>
    </citation>
    <scope>NUCLEOTIDE SEQUENCE [LARGE SCALE MRNA]</scope>
    <source>
        <tissue>Brain cortex</tissue>
    </source>
</reference>
<keyword id="KW-0131">Cell cycle</keyword>
<keyword id="KW-0175">Coiled coil</keyword>
<keyword id="KW-0238">DNA-binding</keyword>
<keyword id="KW-0479">Metal-binding</keyword>
<keyword id="KW-0539">Nucleus</keyword>
<keyword id="KW-1185">Reference proteome</keyword>
<keyword id="KW-0804">Transcription</keyword>
<keyword id="KW-0805">Transcription regulation</keyword>
<keyword id="KW-0862">Zinc</keyword>
<keyword id="KW-0863">Zinc-finger</keyword>